<organismHost>
    <name type="scientific">Bacillus subtilis</name>
    <dbReference type="NCBI Taxonomy" id="1423"/>
</organismHost>
<dbReference type="EMBL" id="X97918">
    <property type="protein sequence ID" value="CAA66519.1"/>
    <property type="molecule type" value="Genomic_DNA"/>
</dbReference>
<dbReference type="PIR" id="T42312">
    <property type="entry name" value="T42312"/>
</dbReference>
<dbReference type="RefSeq" id="NP_690704.1">
    <molecule id="O48472-1"/>
    <property type="nucleotide sequence ID" value="NC_004166.2"/>
</dbReference>
<dbReference type="SMR" id="O48472"/>
<dbReference type="TCDB" id="1.E.31.1.13">
    <property type="family name" value="the spp1 holin (spp1 holin) family"/>
</dbReference>
<dbReference type="KEGG" id="vg:955250"/>
<dbReference type="OrthoDB" id="18112at10239"/>
<dbReference type="Proteomes" id="UP000002559">
    <property type="component" value="Genome"/>
</dbReference>
<dbReference type="GO" id="GO:0020002">
    <property type="term" value="C:host cell plasma membrane"/>
    <property type="evidence" value="ECO:0000314"/>
    <property type="project" value="CACAO"/>
</dbReference>
<dbReference type="GO" id="GO:0016020">
    <property type="term" value="C:membrane"/>
    <property type="evidence" value="ECO:0007669"/>
    <property type="project" value="UniProtKB-KW"/>
</dbReference>
<dbReference type="GO" id="GO:0031640">
    <property type="term" value="P:killing of cells of another organism"/>
    <property type="evidence" value="ECO:0007669"/>
    <property type="project" value="UniProtKB-KW"/>
</dbReference>
<dbReference type="InterPro" id="IPR006479">
    <property type="entry name" value="Holin"/>
</dbReference>
<dbReference type="NCBIfam" id="TIGR01592">
    <property type="entry name" value="holin_SPP1"/>
    <property type="match status" value="1"/>
</dbReference>
<dbReference type="Pfam" id="PF04688">
    <property type="entry name" value="Holin_SPP1"/>
    <property type="match status" value="1"/>
</dbReference>
<reference key="1">
    <citation type="journal article" date="1997" name="Gene">
        <title>The complete nucleotide sequence and functional organization of Bacillus subtilis bacteriophage SPP1.</title>
        <authorList>
            <person name="Alonso J.C."/>
            <person name="Luder G."/>
            <person name="Stiege A.C."/>
            <person name="Chai S."/>
            <person name="Weise F."/>
            <person name="Trautner T.A."/>
        </authorList>
    </citation>
    <scope>NUCLEOTIDE SEQUENCE [LARGE SCALE GENOMIC DNA]</scope>
</reference>
<reference key="2">
    <citation type="journal article" date="2016" name="Mol. Microbiol.">
        <title>More than a hole: the holin lethal function may be required to fully sensitize bacteria to the lytic action of canonical endolysins.</title>
        <authorList>
            <person name="Fernandes S."/>
            <person name="Sao-Jose C."/>
        </authorList>
    </citation>
    <scope>FUNCTION</scope>
</reference>
<reference key="3">
    <citation type="journal article" date="2017" name="Virology">
        <title>Probing the function of the two holin-like proteins of bacteriophage SPP1.</title>
        <authorList>
            <person name="Fernandes S."/>
            <person name="Sao-Jose C."/>
        </authorList>
    </citation>
    <scope>SUBCELLULAR LOCATION</scope>
</reference>
<name>HOL26_BPSPP</name>
<keyword id="KW-0024">Alternative initiation</keyword>
<keyword id="KW-0204">Cytolysis</keyword>
<keyword id="KW-1030">Host cell inner membrane</keyword>
<keyword id="KW-0578">Host cell lysis by virus</keyword>
<keyword id="KW-1032">Host cell membrane</keyword>
<keyword id="KW-1043">Host membrane</keyword>
<keyword id="KW-0472">Membrane</keyword>
<keyword id="KW-1185">Reference proteome</keyword>
<keyword id="KW-0812">Transmembrane</keyword>
<keyword id="KW-1133">Transmembrane helix</keyword>
<keyword id="KW-1188">Viral release from host cell</keyword>
<proteinExistence type="inferred from homology"/>
<feature type="chain" id="PRO_0000439631" description="Putative antiholin" evidence="2">
    <location>
        <begin position="1"/>
        <end position="82"/>
    </location>
</feature>
<feature type="topological domain" description="Cytoplasmic" evidence="5">
    <location>
        <begin position="1"/>
        <end position="8"/>
    </location>
</feature>
<feature type="transmembrane region" description="Helical" evidence="3">
    <location>
        <begin position="9"/>
        <end position="25"/>
    </location>
</feature>
<feature type="topological domain" description="Periplasmic" evidence="5">
    <location>
        <begin position="26"/>
        <end position="40"/>
    </location>
</feature>
<feature type="transmembrane region" description="Helical" evidence="3">
    <location>
        <begin position="41"/>
        <end position="57"/>
    </location>
</feature>
<feature type="topological domain" description="Cytoplasmic" evidence="5">
    <location>
        <begin position="58"/>
        <end position="82"/>
    </location>
</feature>
<feature type="splice variant" id="VSP_058890" description="In isoform Holin-like protein 26." evidence="2">
    <location>
        <begin position="1"/>
        <end position="2"/>
    </location>
</feature>
<comment type="function">
    <molecule>Isoform Holin-like protein 26</molecule>
    <text evidence="6">Probably functions as a holin together with holin-like protein 26. Accumulates harmlessly in the cytoplasmic membrane until it reaches a critical concentration that triggers the formation of micron-scale pores (holes) causing host cell membrane disruption and endolysin escape into the periplasmic space. Determines the precise timing of host cell lysis.</text>
</comment>
<comment type="function">
    <molecule>Isoform Antiholin</molecule>
    <text evidence="1">Counteracts the aggregation of the holin molecules and thus of pore formation.</text>
</comment>
<comment type="subunit">
    <molecule>Isoform Holin-like protein 26</molecule>
    <text evidence="1">Homomultimer. Interacts with isoform Antiholin; this interaction blocks the holin homomultimerization and delays host cell lysis.</text>
</comment>
<comment type="subcellular location">
    <subcellularLocation>
        <location evidence="4">Host cell inner membrane</location>
        <topology evidence="3">Multi-pass membrane protein</topology>
    </subcellularLocation>
    <text evidence="2">Classified as a class II holin.</text>
</comment>
<comment type="alternative products">
    <event type="alternative initiation"/>
    <isoform>
        <id>O48472-1</id>
        <name evidence="2">Antiholin</name>
        <sequence type="displayed"/>
    </isoform>
    <isoform>
        <id>O48472-2</id>
        <name evidence="2">Holin-like protein 26</name>
        <sequence type="described" ref="VSP_058890"/>
    </isoform>
</comment>
<accession>O48472</accession>
<organism>
    <name type="scientific">Bacillus phage SPP1</name>
    <name type="common">Bacteriophage SPP1</name>
    <dbReference type="NCBI Taxonomy" id="10724"/>
    <lineage>
        <taxon>Viruses</taxon>
        <taxon>Duplodnaviria</taxon>
        <taxon>Heunggongvirae</taxon>
        <taxon>Uroviricota</taxon>
        <taxon>Caudoviricetes</taxon>
    </lineage>
</organism>
<sequence length="82" mass="9391">MKMDTGTKVRTILFLIAWVNQLLSFDNLEPIPVDETTAQQVYDAVSVLFTIVVTVWTSFKNNYLTLKGRKQREALKKNGLTK</sequence>
<evidence type="ECO:0000250" key="1">
    <source>
        <dbReference type="UniProtKB" id="P03705"/>
    </source>
</evidence>
<evidence type="ECO:0000250" key="2">
    <source>
        <dbReference type="UniProtKB" id="P27360"/>
    </source>
</evidence>
<evidence type="ECO:0000255" key="3"/>
<evidence type="ECO:0000269" key="4">
    <source>
    </source>
</evidence>
<evidence type="ECO:0000305" key="5"/>
<evidence type="ECO:0000305" key="6">
    <source>
    </source>
</evidence>
<protein>
    <recommendedName>
        <fullName evidence="2">Putative antiholin</fullName>
    </recommendedName>
</protein>
<gene>
    <name type="primary">26</name>
</gene>